<proteinExistence type="inferred from homology"/>
<accession>P92120</accession>
<evidence type="ECO:0000250" key="1">
    <source>
        <dbReference type="UniProtKB" id="P68363"/>
    </source>
</evidence>
<evidence type="ECO:0000305" key="2"/>
<protein>
    <recommendedName>
        <fullName>Tubulin alpha chain</fullName>
        <ecNumber evidence="1">3.6.5.-</ecNumber>
    </recommendedName>
</protein>
<feature type="chain" id="PRO_0000048168" description="Tubulin alpha chain">
    <location>
        <begin position="1" status="less than"/>
        <end position="380" status="greater than"/>
    </location>
</feature>
<feature type="active site" evidence="1">
    <location>
        <position position="228"/>
    </location>
</feature>
<feature type="binding site" evidence="1">
    <location>
        <position position="46"/>
    </location>
    <ligand>
        <name>GTP</name>
        <dbReference type="ChEBI" id="CHEBI:37565"/>
    </ligand>
</feature>
<feature type="binding site" evidence="1">
    <location>
        <position position="46"/>
    </location>
    <ligand>
        <name>Mg(2+)</name>
        <dbReference type="ChEBI" id="CHEBI:18420"/>
    </ligand>
</feature>
<feature type="binding site" evidence="1">
    <location>
        <position position="115"/>
    </location>
    <ligand>
        <name>GTP</name>
        <dbReference type="ChEBI" id="CHEBI:37565"/>
    </ligand>
</feature>
<feature type="binding site" evidence="1">
    <location>
        <position position="119"/>
    </location>
    <ligand>
        <name>GTP</name>
        <dbReference type="ChEBI" id="CHEBI:37565"/>
    </ligand>
</feature>
<feature type="binding site" evidence="1">
    <location>
        <position position="120"/>
    </location>
    <ligand>
        <name>GTP</name>
        <dbReference type="ChEBI" id="CHEBI:37565"/>
    </ligand>
</feature>
<feature type="binding site" evidence="1">
    <location>
        <position position="154"/>
    </location>
    <ligand>
        <name>GTP</name>
        <dbReference type="ChEBI" id="CHEBI:37565"/>
    </ligand>
</feature>
<feature type="binding site" evidence="1">
    <location>
        <position position="181"/>
    </location>
    <ligand>
        <name>GTP</name>
        <dbReference type="ChEBI" id="CHEBI:37565"/>
    </ligand>
</feature>
<feature type="binding site" evidence="1">
    <location>
        <position position="202"/>
    </location>
    <ligand>
        <name>GTP</name>
        <dbReference type="ChEBI" id="CHEBI:37565"/>
    </ligand>
</feature>
<feature type="non-terminal residue">
    <location>
        <position position="1"/>
    </location>
</feature>
<feature type="non-terminal residue">
    <location>
        <position position="380"/>
    </location>
</feature>
<keyword id="KW-0963">Cytoplasm</keyword>
<keyword id="KW-0206">Cytoskeleton</keyword>
<keyword id="KW-0342">GTP-binding</keyword>
<keyword id="KW-0378">Hydrolase</keyword>
<keyword id="KW-0460">Magnesium</keyword>
<keyword id="KW-0479">Metal-binding</keyword>
<keyword id="KW-0493">Microtubule</keyword>
<keyword id="KW-0547">Nucleotide-binding</keyword>
<gene>
    <name type="primary">TUB1</name>
    <name type="synonym">ATUB</name>
</gene>
<sequence length="380" mass="42480">LYCKEHGILPDGRLDQNRMDDESAESFFSQTSVGTYVPRTLMVDLEPGVLESIKTGKYRELYHPGQLISGKEDAANNYARGHYTVGKEIIEPVMEQIRRMADNCDGLQGFLIYHSFGGGTGSGFASLMMDRLAAEFGKKSKLEFSVYPAPKIATAVVEPYNSILTTHTTLDYSDCSFLVDNEAIYDMCRNLGIQRPYYTDINRIIAQVVSSITASLRFPGSLNVDLTEFQTNLVPYPRIHFPLVAYSPMLSKEKAAHEKLSVQEITNACFEPQSQMVRCDTRKGKYMACCLLFRGDVNPKDANTATANVKAKRTNQFVEWCPTGFKVGINSRKPTVLDGEAMAEVSRAVCALSNTTAISEAWKRLNNKFDLMFSKRAFVH</sequence>
<organism>
    <name type="scientific">Encephalitozoon hellem</name>
    <name type="common">Microsporidian parasite</name>
    <dbReference type="NCBI Taxonomy" id="27973"/>
    <lineage>
        <taxon>Eukaryota</taxon>
        <taxon>Fungi</taxon>
        <taxon>Fungi incertae sedis</taxon>
        <taxon>Microsporidia</taxon>
        <taxon>Unikaryonidae</taxon>
        <taxon>Encephalitozoon</taxon>
    </lineage>
</organism>
<reference key="1">
    <citation type="journal article" date="1996" name="Mol. Biol. Evol.">
        <title>Alpha-tubulin from early-diverging eukaryotic lineages and the evolution of the tubulin family.</title>
        <authorList>
            <person name="Keeling P.J."/>
            <person name="Doolittle W.F."/>
        </authorList>
    </citation>
    <scope>NUCLEOTIDE SEQUENCE [GENOMIC DNA]</scope>
    <source>
        <strain>CDC:0291:V213</strain>
    </source>
</reference>
<name>TBA_ENCHE</name>
<comment type="function">
    <text>Tubulin is the major constituent of microtubules, a cylinder consisting of laterally associated linear protofilaments composed of alpha- and beta-tubulin heterodimers. Microtubules grow by the addition of GTP-tubulin dimers to the microtubule end, where a stabilizing cap forms. Below the cap, tubulin dimers are in GDP-bound state, owing to GTPase activity of alpha-tubulin.</text>
</comment>
<comment type="catalytic activity">
    <reaction evidence="1">
        <text>GTP + H2O = GDP + phosphate + H(+)</text>
        <dbReference type="Rhea" id="RHEA:19669"/>
        <dbReference type="ChEBI" id="CHEBI:15377"/>
        <dbReference type="ChEBI" id="CHEBI:15378"/>
        <dbReference type="ChEBI" id="CHEBI:37565"/>
        <dbReference type="ChEBI" id="CHEBI:43474"/>
        <dbReference type="ChEBI" id="CHEBI:58189"/>
    </reaction>
    <physiologicalReaction direction="left-to-right" evidence="1">
        <dbReference type="Rhea" id="RHEA:19670"/>
    </physiologicalReaction>
</comment>
<comment type="cofactor">
    <cofactor evidence="1">
        <name>Mg(2+)</name>
        <dbReference type="ChEBI" id="CHEBI:18420"/>
    </cofactor>
</comment>
<comment type="subunit">
    <text>Dimer of alpha and beta chains. A typical microtubule is a hollow water-filled tube with an outer diameter of 25 nm and an inner diameter of 15 nM. Alpha-beta heterodimers associate head-to-tail to form protofilaments running lengthwise along the microtubule wall with the beta-tubulin subunit facing the microtubule plus end conferring a structural polarity. Microtubules usually have 13 protofilaments but different protofilament numbers can be found in some organisms and specialized cells.</text>
</comment>
<comment type="subcellular location">
    <subcellularLocation>
        <location>Cytoplasm</location>
        <location>Cytoskeleton</location>
    </subcellularLocation>
</comment>
<comment type="similarity">
    <text evidence="2">Belongs to the tubulin family.</text>
</comment>
<dbReference type="EC" id="3.6.5.-" evidence="1"/>
<dbReference type="EMBL" id="U66908">
    <property type="protein sequence ID" value="AAC47418.1"/>
    <property type="molecule type" value="Genomic_DNA"/>
</dbReference>
<dbReference type="SMR" id="P92120"/>
<dbReference type="VEuPathDB" id="MicrosporidiaDB:EHEL_071170"/>
<dbReference type="VEuPathDB" id="MicrosporidiaDB:KMI_08g13440"/>
<dbReference type="GO" id="GO:0005737">
    <property type="term" value="C:cytoplasm"/>
    <property type="evidence" value="ECO:0007669"/>
    <property type="project" value="UniProtKB-KW"/>
</dbReference>
<dbReference type="GO" id="GO:0005874">
    <property type="term" value="C:microtubule"/>
    <property type="evidence" value="ECO:0007669"/>
    <property type="project" value="UniProtKB-KW"/>
</dbReference>
<dbReference type="GO" id="GO:0005525">
    <property type="term" value="F:GTP binding"/>
    <property type="evidence" value="ECO:0007669"/>
    <property type="project" value="UniProtKB-KW"/>
</dbReference>
<dbReference type="GO" id="GO:0016787">
    <property type="term" value="F:hydrolase activity"/>
    <property type="evidence" value="ECO:0007669"/>
    <property type="project" value="UniProtKB-KW"/>
</dbReference>
<dbReference type="GO" id="GO:0046872">
    <property type="term" value="F:metal ion binding"/>
    <property type="evidence" value="ECO:0007669"/>
    <property type="project" value="UniProtKB-KW"/>
</dbReference>
<dbReference type="GO" id="GO:0005200">
    <property type="term" value="F:structural constituent of cytoskeleton"/>
    <property type="evidence" value="ECO:0007669"/>
    <property type="project" value="InterPro"/>
</dbReference>
<dbReference type="GO" id="GO:0007017">
    <property type="term" value="P:microtubule-based process"/>
    <property type="evidence" value="ECO:0007669"/>
    <property type="project" value="InterPro"/>
</dbReference>
<dbReference type="CDD" id="cd02186">
    <property type="entry name" value="alpha_tubulin"/>
    <property type="match status" value="1"/>
</dbReference>
<dbReference type="FunFam" id="3.30.1330.20:FF:000001">
    <property type="entry name" value="Tubulin alpha chain"/>
    <property type="match status" value="1"/>
</dbReference>
<dbReference type="FunFam" id="3.40.50.1440:FF:000007">
    <property type="entry name" value="Tubulin alpha chain"/>
    <property type="match status" value="1"/>
</dbReference>
<dbReference type="Gene3D" id="1.10.287.600">
    <property type="entry name" value="Helix hairpin bin"/>
    <property type="match status" value="1"/>
</dbReference>
<dbReference type="Gene3D" id="3.30.1330.20">
    <property type="entry name" value="Tubulin/FtsZ, C-terminal domain"/>
    <property type="match status" value="1"/>
</dbReference>
<dbReference type="Gene3D" id="3.40.50.1440">
    <property type="entry name" value="Tubulin/FtsZ, GTPase domain"/>
    <property type="match status" value="1"/>
</dbReference>
<dbReference type="InterPro" id="IPR002452">
    <property type="entry name" value="Alpha_tubulin"/>
</dbReference>
<dbReference type="InterPro" id="IPR008280">
    <property type="entry name" value="Tub_FtsZ_C"/>
</dbReference>
<dbReference type="InterPro" id="IPR000217">
    <property type="entry name" value="Tubulin"/>
</dbReference>
<dbReference type="InterPro" id="IPR037103">
    <property type="entry name" value="Tubulin/FtsZ-like_C"/>
</dbReference>
<dbReference type="InterPro" id="IPR018316">
    <property type="entry name" value="Tubulin/FtsZ_2-layer-sand-dom"/>
</dbReference>
<dbReference type="InterPro" id="IPR036525">
    <property type="entry name" value="Tubulin/FtsZ_GTPase_sf"/>
</dbReference>
<dbReference type="InterPro" id="IPR023123">
    <property type="entry name" value="Tubulin_C"/>
</dbReference>
<dbReference type="InterPro" id="IPR017975">
    <property type="entry name" value="Tubulin_CS"/>
</dbReference>
<dbReference type="InterPro" id="IPR003008">
    <property type="entry name" value="Tubulin_FtsZ_GTPase"/>
</dbReference>
<dbReference type="PANTHER" id="PTHR11588">
    <property type="entry name" value="TUBULIN"/>
    <property type="match status" value="1"/>
</dbReference>
<dbReference type="Pfam" id="PF00091">
    <property type="entry name" value="Tubulin"/>
    <property type="match status" value="1"/>
</dbReference>
<dbReference type="Pfam" id="PF03953">
    <property type="entry name" value="Tubulin_C"/>
    <property type="match status" value="1"/>
</dbReference>
<dbReference type="PRINTS" id="PR01162">
    <property type="entry name" value="ALPHATUBULIN"/>
</dbReference>
<dbReference type="PRINTS" id="PR01161">
    <property type="entry name" value="TUBULIN"/>
</dbReference>
<dbReference type="SMART" id="SM00864">
    <property type="entry name" value="Tubulin"/>
    <property type="match status" value="1"/>
</dbReference>
<dbReference type="SMART" id="SM00865">
    <property type="entry name" value="Tubulin_C"/>
    <property type="match status" value="1"/>
</dbReference>
<dbReference type="SUPFAM" id="SSF55307">
    <property type="entry name" value="Tubulin C-terminal domain-like"/>
    <property type="match status" value="1"/>
</dbReference>
<dbReference type="SUPFAM" id="SSF52490">
    <property type="entry name" value="Tubulin nucleotide-binding domain-like"/>
    <property type="match status" value="1"/>
</dbReference>
<dbReference type="PROSITE" id="PS00227">
    <property type="entry name" value="TUBULIN"/>
    <property type="match status" value="1"/>
</dbReference>